<reference key="1">
    <citation type="journal article" date="2006" name="Nat. Genet.">
        <title>The multidrug-resistant human pathogen Clostridium difficile has a highly mobile, mosaic genome.</title>
        <authorList>
            <person name="Sebaihia M."/>
            <person name="Wren B.W."/>
            <person name="Mullany P."/>
            <person name="Fairweather N.F."/>
            <person name="Minton N."/>
            <person name="Stabler R."/>
            <person name="Thomson N.R."/>
            <person name="Roberts A.P."/>
            <person name="Cerdeno-Tarraga A.M."/>
            <person name="Wang H."/>
            <person name="Holden M.T.G."/>
            <person name="Wright A."/>
            <person name="Churcher C."/>
            <person name="Quail M.A."/>
            <person name="Baker S."/>
            <person name="Bason N."/>
            <person name="Brooks K."/>
            <person name="Chillingworth T."/>
            <person name="Cronin A."/>
            <person name="Davis P."/>
            <person name="Dowd L."/>
            <person name="Fraser A."/>
            <person name="Feltwell T."/>
            <person name="Hance Z."/>
            <person name="Holroyd S."/>
            <person name="Jagels K."/>
            <person name="Moule S."/>
            <person name="Mungall K."/>
            <person name="Price C."/>
            <person name="Rabbinowitsch E."/>
            <person name="Sharp S."/>
            <person name="Simmonds M."/>
            <person name="Stevens K."/>
            <person name="Unwin L."/>
            <person name="Whithead S."/>
            <person name="Dupuy B."/>
            <person name="Dougan G."/>
            <person name="Barrell B."/>
            <person name="Parkhill J."/>
        </authorList>
    </citation>
    <scope>NUCLEOTIDE SEQUENCE [LARGE SCALE GENOMIC DNA]</scope>
    <source>
        <strain>630</strain>
    </source>
</reference>
<evidence type="ECO:0000255" key="1">
    <source>
        <dbReference type="HAMAP-Rule" id="MF_00518"/>
    </source>
</evidence>
<feature type="chain" id="PRO_0000259271" description="D-aminoacyl-tRNA deacylase">
    <location>
        <begin position="1"/>
        <end position="149"/>
    </location>
</feature>
<feature type="short sequence motif" description="Gly-cisPro motif, important for rejection of L-amino acids" evidence="1">
    <location>
        <begin position="137"/>
        <end position="138"/>
    </location>
</feature>
<dbReference type="EC" id="3.1.1.96" evidence="1"/>
<dbReference type="EMBL" id="AM180355">
    <property type="protein sequence ID" value="CAJ69630.1"/>
    <property type="molecule type" value="Genomic_DNA"/>
</dbReference>
<dbReference type="RefSeq" id="WP_003426448.1">
    <property type="nucleotide sequence ID" value="NZ_JAUPES010000010.1"/>
</dbReference>
<dbReference type="RefSeq" id="YP_001089255.1">
    <property type="nucleotide sequence ID" value="NC_009089.1"/>
</dbReference>
<dbReference type="SMR" id="Q183H9"/>
<dbReference type="STRING" id="272563.CD630_27430"/>
<dbReference type="EnsemblBacteria" id="CAJ69630">
    <property type="protein sequence ID" value="CAJ69630"/>
    <property type="gene ID" value="CD630_27430"/>
</dbReference>
<dbReference type="GeneID" id="66355151"/>
<dbReference type="KEGG" id="cdf:CD630_27430"/>
<dbReference type="KEGG" id="pdc:CDIF630_03006"/>
<dbReference type="PATRIC" id="fig|272563.120.peg.2890"/>
<dbReference type="eggNOG" id="COG1490">
    <property type="taxonomic scope" value="Bacteria"/>
</dbReference>
<dbReference type="OrthoDB" id="9801395at2"/>
<dbReference type="PhylomeDB" id="Q183H9"/>
<dbReference type="BioCyc" id="PDIF272563:G12WB-2901-MONOMER"/>
<dbReference type="Proteomes" id="UP000001978">
    <property type="component" value="Chromosome"/>
</dbReference>
<dbReference type="GO" id="GO:0005737">
    <property type="term" value="C:cytoplasm"/>
    <property type="evidence" value="ECO:0007669"/>
    <property type="project" value="UniProtKB-SubCell"/>
</dbReference>
<dbReference type="GO" id="GO:0051500">
    <property type="term" value="F:D-tyrosyl-tRNA(Tyr) deacylase activity"/>
    <property type="evidence" value="ECO:0007669"/>
    <property type="project" value="TreeGrafter"/>
</dbReference>
<dbReference type="GO" id="GO:0106026">
    <property type="term" value="F:Gly-tRNA(Ala) deacylase activity"/>
    <property type="evidence" value="ECO:0007669"/>
    <property type="project" value="UniProtKB-UniRule"/>
</dbReference>
<dbReference type="GO" id="GO:0043908">
    <property type="term" value="F:Ser(Gly)-tRNA(Ala) hydrolase activity"/>
    <property type="evidence" value="ECO:0007669"/>
    <property type="project" value="UniProtKB-UniRule"/>
</dbReference>
<dbReference type="GO" id="GO:0000049">
    <property type="term" value="F:tRNA binding"/>
    <property type="evidence" value="ECO:0007669"/>
    <property type="project" value="UniProtKB-UniRule"/>
</dbReference>
<dbReference type="GO" id="GO:0019478">
    <property type="term" value="P:D-amino acid catabolic process"/>
    <property type="evidence" value="ECO:0007669"/>
    <property type="project" value="UniProtKB-UniRule"/>
</dbReference>
<dbReference type="CDD" id="cd00563">
    <property type="entry name" value="Dtyr_deacylase"/>
    <property type="match status" value="1"/>
</dbReference>
<dbReference type="FunFam" id="3.50.80.10:FF:000001">
    <property type="entry name" value="D-aminoacyl-tRNA deacylase"/>
    <property type="match status" value="1"/>
</dbReference>
<dbReference type="Gene3D" id="3.50.80.10">
    <property type="entry name" value="D-tyrosyl-tRNA(Tyr) deacylase"/>
    <property type="match status" value="1"/>
</dbReference>
<dbReference type="HAMAP" id="MF_00518">
    <property type="entry name" value="Deacylase_Dtd"/>
    <property type="match status" value="1"/>
</dbReference>
<dbReference type="InterPro" id="IPR003732">
    <property type="entry name" value="Daa-tRNA_deacyls_DTD"/>
</dbReference>
<dbReference type="InterPro" id="IPR023509">
    <property type="entry name" value="DTD-like_sf"/>
</dbReference>
<dbReference type="NCBIfam" id="TIGR00256">
    <property type="entry name" value="D-aminoacyl-tRNA deacylase"/>
    <property type="match status" value="1"/>
</dbReference>
<dbReference type="PANTHER" id="PTHR10472:SF5">
    <property type="entry name" value="D-AMINOACYL-TRNA DEACYLASE 1"/>
    <property type="match status" value="1"/>
</dbReference>
<dbReference type="PANTHER" id="PTHR10472">
    <property type="entry name" value="D-TYROSYL-TRNA TYR DEACYLASE"/>
    <property type="match status" value="1"/>
</dbReference>
<dbReference type="Pfam" id="PF02580">
    <property type="entry name" value="Tyr_Deacylase"/>
    <property type="match status" value="1"/>
</dbReference>
<dbReference type="SUPFAM" id="SSF69500">
    <property type="entry name" value="DTD-like"/>
    <property type="match status" value="1"/>
</dbReference>
<sequence>MRAVVQRVSSSKVTVDENTIGQINKGLLVLLGVTHDDKSSDVDYMIDKILNLRIFEDENDKMNLSLMDIGGELLVVSQFTLYGDCRKGRRPGFSNAARPELANNLYEEFVKKAKDKGVTVGTGQFAAHMMVELTNDGPVTILLDSSKSF</sequence>
<organism>
    <name type="scientific">Clostridioides difficile (strain 630)</name>
    <name type="common">Peptoclostridium difficile</name>
    <dbReference type="NCBI Taxonomy" id="272563"/>
    <lineage>
        <taxon>Bacteria</taxon>
        <taxon>Bacillati</taxon>
        <taxon>Bacillota</taxon>
        <taxon>Clostridia</taxon>
        <taxon>Peptostreptococcales</taxon>
        <taxon>Peptostreptococcaceae</taxon>
        <taxon>Clostridioides</taxon>
    </lineage>
</organism>
<keyword id="KW-0963">Cytoplasm</keyword>
<keyword id="KW-0378">Hydrolase</keyword>
<keyword id="KW-1185">Reference proteome</keyword>
<keyword id="KW-0694">RNA-binding</keyword>
<keyword id="KW-0820">tRNA-binding</keyword>
<gene>
    <name evidence="1" type="primary">dtd</name>
    <name type="ordered locus">CD630_27430</name>
</gene>
<comment type="function">
    <text evidence="1">An aminoacyl-tRNA editing enzyme that deacylates mischarged D-aminoacyl-tRNAs. Also deacylates mischarged glycyl-tRNA(Ala), protecting cells against glycine mischarging by AlaRS. Acts via tRNA-based rather than protein-based catalysis; rejects L-amino acids rather than detecting D-amino acids in the active site. By recycling D-aminoacyl-tRNA to D-amino acids and free tRNA molecules, this enzyme counteracts the toxicity associated with the formation of D-aminoacyl-tRNA entities in vivo and helps enforce protein L-homochirality.</text>
</comment>
<comment type="catalytic activity">
    <reaction evidence="1">
        <text>glycyl-tRNA(Ala) + H2O = tRNA(Ala) + glycine + H(+)</text>
        <dbReference type="Rhea" id="RHEA:53744"/>
        <dbReference type="Rhea" id="RHEA-COMP:9657"/>
        <dbReference type="Rhea" id="RHEA-COMP:13640"/>
        <dbReference type="ChEBI" id="CHEBI:15377"/>
        <dbReference type="ChEBI" id="CHEBI:15378"/>
        <dbReference type="ChEBI" id="CHEBI:57305"/>
        <dbReference type="ChEBI" id="CHEBI:78442"/>
        <dbReference type="ChEBI" id="CHEBI:78522"/>
        <dbReference type="EC" id="3.1.1.96"/>
    </reaction>
</comment>
<comment type="catalytic activity">
    <reaction evidence="1">
        <text>a D-aminoacyl-tRNA + H2O = a tRNA + a D-alpha-amino acid + H(+)</text>
        <dbReference type="Rhea" id="RHEA:13953"/>
        <dbReference type="Rhea" id="RHEA-COMP:10123"/>
        <dbReference type="Rhea" id="RHEA-COMP:10124"/>
        <dbReference type="ChEBI" id="CHEBI:15377"/>
        <dbReference type="ChEBI" id="CHEBI:15378"/>
        <dbReference type="ChEBI" id="CHEBI:59871"/>
        <dbReference type="ChEBI" id="CHEBI:78442"/>
        <dbReference type="ChEBI" id="CHEBI:79333"/>
        <dbReference type="EC" id="3.1.1.96"/>
    </reaction>
</comment>
<comment type="subunit">
    <text evidence="1">Homodimer.</text>
</comment>
<comment type="subcellular location">
    <subcellularLocation>
        <location evidence="1">Cytoplasm</location>
    </subcellularLocation>
</comment>
<comment type="domain">
    <text evidence="1">A Gly-cisPro motif from one monomer fits into the active site of the other monomer to allow specific chiral rejection of L-amino acids.</text>
</comment>
<comment type="similarity">
    <text evidence="1">Belongs to the DTD family.</text>
</comment>
<proteinExistence type="inferred from homology"/>
<protein>
    <recommendedName>
        <fullName evidence="1">D-aminoacyl-tRNA deacylase</fullName>
        <shortName evidence="1">DTD</shortName>
        <ecNumber evidence="1">3.1.1.96</ecNumber>
    </recommendedName>
    <alternativeName>
        <fullName evidence="1">Gly-tRNA(Ala) deacylase</fullName>
    </alternativeName>
</protein>
<name>DTD_CLOD6</name>
<accession>Q183H9</accession>